<organism>
    <name type="scientific">Metarhizium robertsii (strain ARSEF 23 / ATCC MYA-3075)</name>
    <name type="common">Metarhizium anisopliae (strain ARSEF 23)</name>
    <dbReference type="NCBI Taxonomy" id="655844"/>
    <lineage>
        <taxon>Eukaryota</taxon>
        <taxon>Fungi</taxon>
        <taxon>Dikarya</taxon>
        <taxon>Ascomycota</taxon>
        <taxon>Pezizomycotina</taxon>
        <taxon>Sordariomycetes</taxon>
        <taxon>Hypocreomycetidae</taxon>
        <taxon>Hypocreales</taxon>
        <taxon>Clavicipitaceae</taxon>
        <taxon>Metarhizium</taxon>
    </lineage>
</organism>
<name>DTXS3_METRA</name>
<keyword id="KW-0521">NADP</keyword>
<keyword id="KW-0560">Oxidoreductase</keyword>
<proteinExistence type="inferred from homology"/>
<dbReference type="EC" id="1.1.1.-" evidence="6"/>
<dbReference type="EMBL" id="ADNJ02000010">
    <property type="protein sequence ID" value="EFY94502.2"/>
    <property type="molecule type" value="Genomic_DNA"/>
</dbReference>
<dbReference type="RefSeq" id="XP_007826234.2">
    <property type="nucleotide sequence ID" value="XM_007828043.2"/>
</dbReference>
<dbReference type="SMR" id="E9FCP6"/>
<dbReference type="GeneID" id="19264331"/>
<dbReference type="KEGG" id="maj:MAA_10045"/>
<dbReference type="HOGENOM" id="CLU_023205_2_0_1"/>
<dbReference type="OrthoDB" id="1720422at2759"/>
<dbReference type="Proteomes" id="UP000002498">
    <property type="component" value="Unassembled WGS sequence"/>
</dbReference>
<dbReference type="GO" id="GO:0016491">
    <property type="term" value="F:oxidoreductase activity"/>
    <property type="evidence" value="ECO:0007669"/>
    <property type="project" value="UniProtKB-KW"/>
</dbReference>
<dbReference type="CDD" id="cd19079">
    <property type="entry name" value="AKR_EcYajO-like"/>
    <property type="match status" value="1"/>
</dbReference>
<dbReference type="FunFam" id="3.20.20.100:FF:000004">
    <property type="entry name" value="Oxidoreductase, aldo/keto reductase"/>
    <property type="match status" value="1"/>
</dbReference>
<dbReference type="Gene3D" id="3.20.20.100">
    <property type="entry name" value="NADP-dependent oxidoreductase domain"/>
    <property type="match status" value="1"/>
</dbReference>
<dbReference type="InterPro" id="IPR050523">
    <property type="entry name" value="AKR_Detox_Biosynth"/>
</dbReference>
<dbReference type="InterPro" id="IPR023210">
    <property type="entry name" value="NADP_OxRdtase_dom"/>
</dbReference>
<dbReference type="InterPro" id="IPR036812">
    <property type="entry name" value="NADP_OxRdtase_dom_sf"/>
</dbReference>
<dbReference type="PANTHER" id="PTHR43364">
    <property type="entry name" value="NADH-SPECIFIC METHYLGLYOXAL REDUCTASE-RELATED"/>
    <property type="match status" value="1"/>
</dbReference>
<dbReference type="PANTHER" id="PTHR43364:SF9">
    <property type="entry name" value="OXIDOREDUCTASE"/>
    <property type="match status" value="1"/>
</dbReference>
<dbReference type="Pfam" id="PF00248">
    <property type="entry name" value="Aldo_ket_red"/>
    <property type="match status" value="1"/>
</dbReference>
<dbReference type="SUPFAM" id="SSF51430">
    <property type="entry name" value="NAD(P)-linked oxidoreductase"/>
    <property type="match status" value="1"/>
</dbReference>
<accession>E9FCP6</accession>
<gene>
    <name evidence="4" type="primary">dtxS3</name>
    <name type="ORF">MAA_10045</name>
</gene>
<sequence>MAKVSLEKLLRIPPSLTQSISQTKVDYLNLGHSGLRVSRPILGGLHLGSRKWLPWVLDEEKALPILKAAYDLGVNTWDTANVYSNGESERIIAKALSKYKIPRNKVVLMTKCYRVMSDPERFDPGSGVTMHHELADYSKDYVNQWGLSRRALFSAVEASLDRLNTSYIDVLQIHRFDHTVPPEETMSALNDLIRAGMVRYIGASSMWTFQFATLQHIAETKGLTKFISMQNHYNLIYREEEREMNQYCKMTGVGLIPWGPLASGRLARRPTQEEGSLRASCSAHGSLYESDDYNVDRIIQRVAEIAEKRGWPMSHVSLAWLNRRVTAPIIGFGSVGRIEEALAARGKELSRDEEQYLEELYVPQRIQGHS</sequence>
<evidence type="ECO:0000250" key="1">
    <source>
        <dbReference type="UniProtKB" id="O43488"/>
    </source>
</evidence>
<evidence type="ECO:0000250" key="2">
    <source>
        <dbReference type="UniProtKB" id="Q8CG76"/>
    </source>
</evidence>
<evidence type="ECO:0000269" key="3">
    <source>
    </source>
</evidence>
<evidence type="ECO:0000303" key="4">
    <source>
    </source>
</evidence>
<evidence type="ECO:0000305" key="5"/>
<evidence type="ECO:0000305" key="6">
    <source>
    </source>
</evidence>
<reference key="1">
    <citation type="journal article" date="2011" name="PLoS Genet.">
        <title>Genome sequencing and comparative transcriptomics of the model entomopathogenic fungi Metarhizium anisopliae and M. acridum.</title>
        <authorList>
            <person name="Gao Q."/>
            <person name="Jin K."/>
            <person name="Ying S.-H."/>
            <person name="Zhang Y."/>
            <person name="Xiao G."/>
            <person name="Shang Y."/>
            <person name="Duan Z."/>
            <person name="Hu X."/>
            <person name="Xie X.-Q."/>
            <person name="Zhou G."/>
            <person name="Peng G."/>
            <person name="Luo Z."/>
            <person name="Huang W."/>
            <person name="Wang B."/>
            <person name="Fang W."/>
            <person name="Wang S."/>
            <person name="Zhong Y."/>
            <person name="Ma L.-J."/>
            <person name="St Leger R.J."/>
            <person name="Zhao G.-P."/>
            <person name="Pei Y."/>
            <person name="Feng M.-G."/>
            <person name="Xia Y."/>
            <person name="Wang C."/>
        </authorList>
    </citation>
    <scope>NUCLEOTIDE SEQUENCE [LARGE SCALE GENOMIC DNA]</scope>
    <source>
        <strain>ARSEF 23 / ATCC MYA-3075</strain>
    </source>
</reference>
<reference key="2">
    <citation type="journal article" date="2014" name="Proc. Natl. Acad. Sci. U.S.A.">
        <title>Trajectory and genomic determinants of fungal-pathogen speciation and host adaptation.</title>
        <authorList>
            <person name="Hu X."/>
            <person name="Xiao G."/>
            <person name="Zheng P."/>
            <person name="Shang Y."/>
            <person name="Su Y."/>
            <person name="Zhang X."/>
            <person name="Liu X."/>
            <person name="Zhan S."/>
            <person name="St Leger R.J."/>
            <person name="Wang C."/>
        </authorList>
    </citation>
    <scope>GENOME REANNOTATION</scope>
    <source>
        <strain>ARSEF 23 / ATCC MYA-3075</strain>
    </source>
</reference>
<reference key="3">
    <citation type="journal article" date="2012" name="Proc. Natl. Acad. Sci. U.S.A.">
        <title>Unveiling the biosynthetic puzzle of destruxins in Metarhizium species.</title>
        <authorList>
            <person name="Wang B."/>
            <person name="Kang Q."/>
            <person name="Lu Y."/>
            <person name="Bai L."/>
            <person name="Wang C."/>
        </authorList>
    </citation>
    <scope>FUNCTION</scope>
    <scope>DISRUPTION PHENOTYPE</scope>
</reference>
<comment type="function">
    <text evidence="3">Aldo-keto reductase; part of the gene cluster that mediates the biosynthesis of destruxins, insecticidal cyclic hexadepsipeptides which induce flaccid paralysis and visceral muscle contraction in insects through targeting the calcium channels and vacuolar-type ATPases (PubMed:22232661). The aldo-keto reductase dtxS3 converts alpha-ketoisocaproic acid from deaminated leucine into alpha-hydroxyisocaproic acid (HIC), which is the first substrate for destruxin assembly by dtxS1 (PubMed:22232661). L-aspartate decarboxylase dtxS4 converts aspartic acid into beta-alanine, the last substrate for the destruxin assembly line performed by dtxS1 (PubMed:22232661). The nonribosomal peptide synthetase dtxS1 synthesizes destruxins B and B2, whereas the cytochrome P450 monooxygenase dtxS2 is required to convert destruxin B into other destruxin derivatives, including destructins C, D, A and E (PubMed:22232661). Destruxin E-diol (ED) is further produced in a non-enzymatic manner from destruxin E (PubMed:22232661). Destruxins play an important role in virulence and escape from insect host immune defenses (PubMed:22232661).</text>
</comment>
<comment type="pathway">
    <text evidence="3">Secondary metabolite biosynthesis.</text>
</comment>
<comment type="disruption phenotype">
    <text evidence="3">Impairs the production of destruxins (PubMed:22232661).</text>
</comment>
<comment type="similarity">
    <text evidence="5">Belongs to the aldo/keto reductase family.</text>
</comment>
<protein>
    <recommendedName>
        <fullName evidence="5">Aldo-keto reductase dtxS3</fullName>
        <ecNumber evidence="6">1.1.1.-</ecNumber>
    </recommendedName>
    <alternativeName>
        <fullName evidence="4">Destruxin synthesis protein 3</fullName>
    </alternativeName>
</protein>
<feature type="chain" id="PRO_0000436438" description="Aldo-keto reductase dtxS3">
    <location>
        <begin position="1"/>
        <end position="370"/>
    </location>
</feature>
<feature type="active site" description="Proton donor" evidence="2">
    <location>
        <position position="83"/>
    </location>
</feature>
<feature type="binding site" evidence="1">
    <location>
        <position position="78"/>
    </location>
    <ligand>
        <name>NADP(+)</name>
        <dbReference type="ChEBI" id="CHEBI:58349"/>
    </ligand>
</feature>
<feature type="binding site" evidence="2">
    <location>
        <position position="174"/>
    </location>
    <ligand>
        <name>substrate</name>
    </ligand>
</feature>
<feature type="binding site" evidence="1">
    <location>
        <begin position="204"/>
        <end position="205"/>
    </location>
    <ligand>
        <name>NADP(+)</name>
        <dbReference type="ChEBI" id="CHEBI:58349"/>
    </ligand>
</feature>
<feature type="binding site" evidence="1">
    <location>
        <position position="230"/>
    </location>
    <ligand>
        <name>NADP(+)</name>
        <dbReference type="ChEBI" id="CHEBI:58349"/>
    </ligand>
</feature>
<feature type="binding site" evidence="1">
    <location>
        <begin position="259"/>
        <end position="269"/>
    </location>
    <ligand>
        <name>NADP(+)</name>
        <dbReference type="ChEBI" id="CHEBI:58349"/>
    </ligand>
</feature>
<feature type="binding site" evidence="1">
    <location>
        <begin position="333"/>
        <end position="341"/>
    </location>
    <ligand>
        <name>NADP(+)</name>
        <dbReference type="ChEBI" id="CHEBI:58349"/>
    </ligand>
</feature>